<reference key="1">
    <citation type="journal article" date="2006" name="J. Biol. Chem.">
        <title>Evolution of the primate cathelicidin. Correlation between structural variations and antimicrobial activity.</title>
        <authorList>
            <person name="Zelezetsky I."/>
            <person name="Pontillo A."/>
            <person name="Puzzi L."/>
            <person name="Antcheva N."/>
            <person name="Segat L."/>
            <person name="Pacor S."/>
            <person name="Crovella S."/>
            <person name="Tossi A."/>
        </authorList>
    </citation>
    <scope>NUCLEOTIDE SEQUENCE [GENOMIC DNA]</scope>
</reference>
<reference evidence="6" key="2">
    <citation type="journal article" date="2020" name="Nat. Commun.">
        <title>The Human LL-37(17-29) antimicrobial peptide reveals a functional supramolecular structure.</title>
        <authorList>
            <person name="Engelberg Y."/>
            <person name="Landau M."/>
        </authorList>
    </citation>
    <scope>X-RAY CRYSTALLOGRAPHY (1.1 ANGSTROMS) OF 150-162</scope>
    <scope>DOMAIN</scope>
</reference>
<feature type="signal peptide" evidence="3">
    <location>
        <begin position="1"/>
        <end position="30"/>
    </location>
</feature>
<feature type="propeptide" id="PRO_0000251752" description="Cathelin-like domain (CLD)" evidence="1">
    <location>
        <begin position="31"/>
        <end position="131"/>
    </location>
</feature>
<feature type="peptide" id="PRO_0000251753" description="Antibacterial peptide FALL-39" evidence="1">
    <location>
        <begin position="132"/>
        <end position="170"/>
    </location>
</feature>
<feature type="peptide" id="PRO_0000251754" description="Antibacterial peptide LL-37" evidence="1">
    <location>
        <begin position="134"/>
        <end position="170"/>
    </location>
</feature>
<feature type="region of interest" description="Active core" evidence="4">
    <location>
        <begin position="150"/>
        <end position="162"/>
    </location>
</feature>
<feature type="disulfide bond" evidence="1">
    <location>
        <begin position="86"/>
        <end position="97"/>
    </location>
</feature>
<feature type="disulfide bond" evidence="1">
    <location>
        <begin position="108"/>
        <end position="125"/>
    </location>
</feature>
<feature type="helix" evidence="7">
    <location>
        <begin position="151"/>
        <end position="161"/>
    </location>
</feature>
<comment type="function">
    <text evidence="1">Antimicrobial protein that is an integral component of the innate immune system (By similarity). Binds to bacterial lipopolysaccharides (LPS) (By similarity). Acts via neutrophil N-formyl peptide receptors to enhance the release of CXCL2 (By similarity). Postsecretory processing generates multiple cathelicidin antimicrobial peptides with various lengths which act as a topical antimicrobial defense in sweat on skin (By similarity). The unprocessed precursor form, cathelicidin antimicrobial peptide, inhibits the growth of Gram-negative E.coli and E.aerogenes with efficiencies comparable to that of the mature peptide LL-37 (in vitro) (By similarity).</text>
</comment>
<comment type="function">
    <molecule>Antibacterial peptide LL-37</molecule>
    <text evidence="1">Antimicrobial peptide that is an integral component of the innate immune system (By similarity). Binds to bacterial lipopolysaccharides (LPS) (By similarity). Causes membrane permeabilization by forming transmembrane pores (in vitro) (By similarity). Causes lysis of E.coli (By similarity). Exhibits antimicrobial activity against Gram-negative bacteria such as P.aeruginosa, S.typhimurium, E.aerogenes, E.coli and P.syringae, Gram-positive bacteria such as L.monocytogenes, S.epidermidis, S.pyogenes and S.aureus, as well as vancomycin-resistant enterococci (in vitro) (By similarity). Exhibits antimicrobial activity against methicillin-resistant S.aureus, P.mirabilis, and C.albicans in low-salt media, but not in media containing 100 mM NaCl (in vitro) (By similarity). Forms chiral supramolecular assemblies with quinolone signal (PQS) molecules of P.aeruginosa, which may lead to interference of bacterial quorum signaling and perturbance of bacterial biofilm formation (By similarity). May form supramolecular fiber-like assemblies on bacterial membranes (By similarity). Induces cytokine and chemokine producation as well as TNF/TNFA and CSF2/GMCSF production in normal human keratinocytes (By similarity). Exhibits hemolytic activity against red blood cells (By similarity).</text>
</comment>
<comment type="function">
    <molecule>Antibacterial peptide FALL-39</molecule>
    <text evidence="1">Exhibits antimicrobial activity against E.coli and B.megaterium (in vitro).</text>
</comment>
<comment type="subunit">
    <molecule>Antibacterial peptide LL-37</molecule>
    <text evidence="1">Monomer, homodimer or homotrimer (in vitro) (By similarity). Oligomerizes as tetra- or hexamer in solution (in vitro) (By similarity).</text>
</comment>
<comment type="subcellular location">
    <subcellularLocation>
        <location evidence="2">Secreted</location>
    </subcellularLocation>
    <subcellularLocation>
        <location evidence="2">Vesicle</location>
    </subcellularLocation>
    <text evidence="2">Stored as pro-peptide in granules and phagolysosomes of neutrophils (By similarity). Secreted in sweat onto skin (By similarity).</text>
</comment>
<comment type="domain">
    <text evidence="2">The cathelin-like domain (CLD), which is the propeptide part, does not seem to exhibit auto-inhibitory function, as it does not inhibit the antibacterial activity of antibacterial peptide LL-37.</text>
</comment>
<comment type="domain">
    <molecule>Antibacterial peptide LL-37</molecule>
    <text evidence="2">Undergoes conformational change in the presence of lipid A, transitioning from a random coil to an alpha-helical structure.</text>
</comment>
<comment type="domain">
    <molecule>Antibacterial peptide LL-37</molecule>
    <text evidence="2 4">Residues 17-29 of LL-37 represent the active core of the antimicrobial peptide (PubMed:32753597). Forms ribbon-like fibrils and exhibits antibacterial activity against Gram-positive M.luteus (MIC=53 uM) (PubMed:32753597). Also exhibits antibacterial activity against Gram-negative E.coli and P.fluorescens (By similarity).</text>
</comment>
<comment type="PTM">
    <text evidence="1">Proteolytically cleaved by proteinase PRTN3 into antibacterial peptide LL-37 (By similarity). Proteolytically cleaved by cathepsin CTSG and neutrophil elastase ELANE (By similarity).</text>
</comment>
<comment type="PTM">
    <molecule>Antibacterial peptide LL-37</molecule>
    <text evidence="1">Resistant to proteolytic degradation in solution, and when bound to both zwitterionic (mimicking mammalian membranes) and negatively charged membranes (mimicking bacterial membranes).</text>
</comment>
<comment type="PTM">
    <text evidence="1">After secretion onto the skin surface, the CAMP gene product is processed by a serine protease-dependent mechanism into multiple novel antimicrobial peptides distinct from and shorter than cathelicidin LL-37 (By similarity). These peptides show enhanced antimicrobial action, acquiring the ability to kill skin pathogens such as S.aureus, E.coli and C.albicans. These peptides have lost the ability to stimulate CXCL8/IL8 release from keratinocytes (By similarity). The peptides act synergistically, killing bacteria at lower concentrations when present together, and maintain activity at increased salt condition (By similarity).</text>
</comment>
<comment type="similarity">
    <text evidence="5">Belongs to the cathelicidin family.</text>
</comment>
<proteinExistence type="evidence at protein level"/>
<gene>
    <name evidence="1" type="primary">CAMP</name>
</gene>
<organism>
    <name type="scientific">Gorilla gorilla gorilla</name>
    <name type="common">Western lowland gorilla</name>
    <dbReference type="NCBI Taxonomy" id="9595"/>
    <lineage>
        <taxon>Eukaryota</taxon>
        <taxon>Metazoa</taxon>
        <taxon>Chordata</taxon>
        <taxon>Craniata</taxon>
        <taxon>Vertebrata</taxon>
        <taxon>Euteleostomi</taxon>
        <taxon>Mammalia</taxon>
        <taxon>Eutheria</taxon>
        <taxon>Euarchontoglires</taxon>
        <taxon>Primates</taxon>
        <taxon>Haplorrhini</taxon>
        <taxon>Catarrhini</taxon>
        <taxon>Hominidae</taxon>
        <taxon>Gorilla</taxon>
    </lineage>
</organism>
<dbReference type="EMBL" id="DQ471359">
    <property type="protein sequence ID" value="ABE96623.1"/>
    <property type="molecule type" value="Genomic_DNA"/>
</dbReference>
<dbReference type="PDB" id="6S6N">
    <property type="method" value="X-ray"/>
    <property type="resolution" value="1.10 A"/>
    <property type="chains" value="A/B=150-162"/>
</dbReference>
<dbReference type="PDBsum" id="6S6N"/>
<dbReference type="SMR" id="Q1KLY3"/>
<dbReference type="FunCoup" id="Q1KLY3">
    <property type="interactions" value="260"/>
</dbReference>
<dbReference type="STRING" id="9593.ENSGGOP00000012112"/>
<dbReference type="eggNOG" id="ENOG502SAES">
    <property type="taxonomic scope" value="Eukaryota"/>
</dbReference>
<dbReference type="HOGENOM" id="CLU_121724_1_1_1"/>
<dbReference type="InParanoid" id="Q1KLY3"/>
<dbReference type="Proteomes" id="UP000001519">
    <property type="component" value="Unplaced"/>
</dbReference>
<dbReference type="GO" id="GO:0005615">
    <property type="term" value="C:extracellular space"/>
    <property type="evidence" value="ECO:0000318"/>
    <property type="project" value="GO_Central"/>
</dbReference>
<dbReference type="GO" id="GO:0031982">
    <property type="term" value="C:vesicle"/>
    <property type="evidence" value="ECO:0007669"/>
    <property type="project" value="UniProtKB-SubCell"/>
</dbReference>
<dbReference type="GO" id="GO:0001530">
    <property type="term" value="F:lipopolysaccharide binding"/>
    <property type="evidence" value="ECO:0000318"/>
    <property type="project" value="GO_Central"/>
</dbReference>
<dbReference type="GO" id="GO:0061844">
    <property type="term" value="P:antimicrobial humoral immune response mediated by antimicrobial peptide"/>
    <property type="evidence" value="ECO:0000318"/>
    <property type="project" value="GO_Central"/>
</dbReference>
<dbReference type="GO" id="GO:0050829">
    <property type="term" value="P:defense response to Gram-negative bacterium"/>
    <property type="evidence" value="ECO:0000318"/>
    <property type="project" value="GO_Central"/>
</dbReference>
<dbReference type="GO" id="GO:0050830">
    <property type="term" value="P:defense response to Gram-positive bacterium"/>
    <property type="evidence" value="ECO:0000318"/>
    <property type="project" value="GO_Central"/>
</dbReference>
<dbReference type="GO" id="GO:0045087">
    <property type="term" value="P:innate immune response"/>
    <property type="evidence" value="ECO:0000318"/>
    <property type="project" value="GO_Central"/>
</dbReference>
<dbReference type="GO" id="GO:0042119">
    <property type="term" value="P:neutrophil activation"/>
    <property type="evidence" value="ECO:0000250"/>
    <property type="project" value="UniProtKB"/>
</dbReference>
<dbReference type="FunFam" id="3.10.450.10:FF:000003">
    <property type="entry name" value="Cathelicidin antimicrobial peptide"/>
    <property type="match status" value="1"/>
</dbReference>
<dbReference type="Gene3D" id="3.10.450.10">
    <property type="match status" value="1"/>
</dbReference>
<dbReference type="InterPro" id="IPR001894">
    <property type="entry name" value="Cathelicidin-like"/>
</dbReference>
<dbReference type="InterPro" id="IPR018216">
    <property type="entry name" value="Cathelicidin_CS"/>
</dbReference>
<dbReference type="InterPro" id="IPR022746">
    <property type="entry name" value="Cathlecidin_C"/>
</dbReference>
<dbReference type="InterPro" id="IPR046350">
    <property type="entry name" value="Cystatin_sf"/>
</dbReference>
<dbReference type="PANTHER" id="PTHR10206">
    <property type="entry name" value="CATHELICIDIN"/>
    <property type="match status" value="1"/>
</dbReference>
<dbReference type="PANTHER" id="PTHR10206:SF2">
    <property type="entry name" value="CATHELICIDIN ANTIMICROBIAL PEPTIDE"/>
    <property type="match status" value="1"/>
</dbReference>
<dbReference type="Pfam" id="PF12153">
    <property type="entry name" value="CAP18_C"/>
    <property type="match status" value="1"/>
</dbReference>
<dbReference type="Pfam" id="PF00666">
    <property type="entry name" value="Cathelicidins"/>
    <property type="match status" value="1"/>
</dbReference>
<dbReference type="SUPFAM" id="SSF54403">
    <property type="entry name" value="Cystatin/monellin"/>
    <property type="match status" value="1"/>
</dbReference>
<dbReference type="PROSITE" id="PS00946">
    <property type="entry name" value="CATHELICIDINS_1"/>
    <property type="match status" value="1"/>
</dbReference>
<dbReference type="PROSITE" id="PS00947">
    <property type="entry name" value="CATHELICIDINS_2"/>
    <property type="match status" value="1"/>
</dbReference>
<sequence length="170" mass="19255">MKTQRDGHSLGWWSLVLLLLGLVMPLAIIAQVLSYKEAVLRAIDGINQRSSDANLYRLLDLDPRPTMDGDPDTPKPVSFTVKETVCPRTTQQSPEDCDFKKDGLVKRCMGTVTLNQARGSFDISCDKDNKRFALLGDFFRKAKEKIGKESKRIVQRIKDFLRNLVPRTES</sequence>
<accession>Q1KLY3</accession>
<evidence type="ECO:0000250" key="1">
    <source>
        <dbReference type="UniProtKB" id="P49913"/>
    </source>
</evidence>
<evidence type="ECO:0000250" key="2">
    <source>
        <dbReference type="UniProtKB" id="P54229"/>
    </source>
</evidence>
<evidence type="ECO:0000255" key="3"/>
<evidence type="ECO:0000269" key="4">
    <source>
    </source>
</evidence>
<evidence type="ECO:0000305" key="5"/>
<evidence type="ECO:0007744" key="6">
    <source>
        <dbReference type="PDB" id="6S6N"/>
    </source>
</evidence>
<evidence type="ECO:0007829" key="7">
    <source>
        <dbReference type="PDB" id="6S6N"/>
    </source>
</evidence>
<protein>
    <recommendedName>
        <fullName evidence="1">Cathelicidin antimicrobial peptide</fullName>
    </recommendedName>
    <component>
        <recommendedName>
            <fullName evidence="1">Antibacterial peptide FALL-39</fullName>
        </recommendedName>
        <alternativeName>
            <fullName evidence="1">FALL-39 peptide antibiotic</fullName>
        </alternativeName>
    </component>
    <component>
        <recommendedName>
            <fullName evidence="1">Antibacterial peptide LL-37</fullName>
        </recommendedName>
    </component>
</protein>
<keyword id="KW-0002">3D-structure</keyword>
<keyword id="KW-0044">Antibiotic</keyword>
<keyword id="KW-0929">Antimicrobial</keyword>
<keyword id="KW-0165">Cleavage on pair of basic residues</keyword>
<keyword id="KW-1015">Disulfide bond</keyword>
<keyword id="KW-0391">Immunity</keyword>
<keyword id="KW-0399">Innate immunity</keyword>
<keyword id="KW-1185">Reference proteome</keyword>
<keyword id="KW-0964">Secreted</keyword>
<keyword id="KW-0732">Signal</keyword>
<name>CAMP_GORGO</name>